<comment type="function">
    <text evidence="1">One of the primary rRNA binding proteins, it binds directly to 16S rRNA central domain where it helps coordinate assembly of the platform of the 30S subunit.</text>
</comment>
<comment type="subunit">
    <text evidence="1">Part of the 30S ribosomal subunit. Contacts proteins S5 and S12.</text>
</comment>
<comment type="similarity">
    <text evidence="1">Belongs to the universal ribosomal protein uS8 family.</text>
</comment>
<name>RS8_STRZP</name>
<keyword id="KW-0687">Ribonucleoprotein</keyword>
<keyword id="KW-0689">Ribosomal protein</keyword>
<keyword id="KW-0694">RNA-binding</keyword>
<keyword id="KW-0699">rRNA-binding</keyword>
<reference key="1">
    <citation type="journal article" date="2010" name="Genome Biol.">
        <title>Structure and dynamics of the pan-genome of Streptococcus pneumoniae and closely related species.</title>
        <authorList>
            <person name="Donati C."/>
            <person name="Hiller N.L."/>
            <person name="Tettelin H."/>
            <person name="Muzzi A."/>
            <person name="Croucher N.J."/>
            <person name="Angiuoli S.V."/>
            <person name="Oggioni M."/>
            <person name="Dunning Hotopp J.C."/>
            <person name="Hu F.Z."/>
            <person name="Riley D.R."/>
            <person name="Covacci A."/>
            <person name="Mitchell T.J."/>
            <person name="Bentley S.D."/>
            <person name="Kilian M."/>
            <person name="Ehrlich G.D."/>
            <person name="Rappuoli R."/>
            <person name="Moxon E.R."/>
            <person name="Masignani V."/>
        </authorList>
    </citation>
    <scope>NUCLEOTIDE SEQUENCE [LARGE SCALE GENOMIC DNA]</scope>
    <source>
        <strain>P1031</strain>
    </source>
</reference>
<organism>
    <name type="scientific">Streptococcus pneumoniae (strain P1031)</name>
    <dbReference type="NCBI Taxonomy" id="488223"/>
    <lineage>
        <taxon>Bacteria</taxon>
        <taxon>Bacillati</taxon>
        <taxon>Bacillota</taxon>
        <taxon>Bacilli</taxon>
        <taxon>Lactobacillales</taxon>
        <taxon>Streptococcaceae</taxon>
        <taxon>Streptococcus</taxon>
    </lineage>
</organism>
<feature type="chain" id="PRO_1000165356" description="Small ribosomal subunit protein uS8">
    <location>
        <begin position="1"/>
        <end position="132"/>
    </location>
</feature>
<protein>
    <recommendedName>
        <fullName evidence="1">Small ribosomal subunit protein uS8</fullName>
    </recommendedName>
    <alternativeName>
        <fullName evidence="2">30S ribosomal protein S8</fullName>
    </alternativeName>
</protein>
<gene>
    <name evidence="1" type="primary">rpsH</name>
    <name type="ordered locus">SPP_0274</name>
</gene>
<dbReference type="EMBL" id="CP000920">
    <property type="protein sequence ID" value="ACO21294.1"/>
    <property type="molecule type" value="Genomic_DNA"/>
</dbReference>
<dbReference type="RefSeq" id="WP_000245505.1">
    <property type="nucleotide sequence ID" value="NC_012467.1"/>
</dbReference>
<dbReference type="SMR" id="C1CIB1"/>
<dbReference type="GeneID" id="45652295"/>
<dbReference type="KEGG" id="spp:SPP_0274"/>
<dbReference type="HOGENOM" id="CLU_098428_0_2_9"/>
<dbReference type="GO" id="GO:1990904">
    <property type="term" value="C:ribonucleoprotein complex"/>
    <property type="evidence" value="ECO:0007669"/>
    <property type="project" value="UniProtKB-KW"/>
</dbReference>
<dbReference type="GO" id="GO:0005840">
    <property type="term" value="C:ribosome"/>
    <property type="evidence" value="ECO:0007669"/>
    <property type="project" value="UniProtKB-KW"/>
</dbReference>
<dbReference type="GO" id="GO:0019843">
    <property type="term" value="F:rRNA binding"/>
    <property type="evidence" value="ECO:0007669"/>
    <property type="project" value="UniProtKB-UniRule"/>
</dbReference>
<dbReference type="GO" id="GO:0003735">
    <property type="term" value="F:structural constituent of ribosome"/>
    <property type="evidence" value="ECO:0007669"/>
    <property type="project" value="InterPro"/>
</dbReference>
<dbReference type="GO" id="GO:0006412">
    <property type="term" value="P:translation"/>
    <property type="evidence" value="ECO:0007669"/>
    <property type="project" value="UniProtKB-UniRule"/>
</dbReference>
<dbReference type="FunFam" id="3.30.1370.30:FF:000002">
    <property type="entry name" value="30S ribosomal protein S8"/>
    <property type="match status" value="1"/>
</dbReference>
<dbReference type="FunFam" id="3.30.1490.10:FF:000001">
    <property type="entry name" value="30S ribosomal protein S8"/>
    <property type="match status" value="1"/>
</dbReference>
<dbReference type="Gene3D" id="3.30.1370.30">
    <property type="match status" value="1"/>
</dbReference>
<dbReference type="Gene3D" id="3.30.1490.10">
    <property type="match status" value="1"/>
</dbReference>
<dbReference type="HAMAP" id="MF_01302_B">
    <property type="entry name" value="Ribosomal_uS8_B"/>
    <property type="match status" value="1"/>
</dbReference>
<dbReference type="InterPro" id="IPR000630">
    <property type="entry name" value="Ribosomal_uS8"/>
</dbReference>
<dbReference type="InterPro" id="IPR047863">
    <property type="entry name" value="Ribosomal_uS8_CS"/>
</dbReference>
<dbReference type="InterPro" id="IPR035987">
    <property type="entry name" value="Ribosomal_uS8_sf"/>
</dbReference>
<dbReference type="NCBIfam" id="NF001109">
    <property type="entry name" value="PRK00136.1"/>
    <property type="match status" value="1"/>
</dbReference>
<dbReference type="PANTHER" id="PTHR11758">
    <property type="entry name" value="40S RIBOSOMAL PROTEIN S15A"/>
    <property type="match status" value="1"/>
</dbReference>
<dbReference type="Pfam" id="PF00410">
    <property type="entry name" value="Ribosomal_S8"/>
    <property type="match status" value="1"/>
</dbReference>
<dbReference type="SUPFAM" id="SSF56047">
    <property type="entry name" value="Ribosomal protein S8"/>
    <property type="match status" value="1"/>
</dbReference>
<dbReference type="PROSITE" id="PS00053">
    <property type="entry name" value="RIBOSOMAL_S8"/>
    <property type="match status" value="1"/>
</dbReference>
<proteinExistence type="inferred from homology"/>
<accession>C1CIB1</accession>
<sequence length="132" mass="14754">MVMTDPIADFLTRIRNANQAKHEVLEVPASNIKKGIAEILKREGFVKNVEIIEDDKQGVIRVFLKYGPNGEKVITNLKRVSKPGLRVYKKREDLPKVLNGLGIAILSTSEGLLTDKEARQKNVGGEVIAYVW</sequence>
<evidence type="ECO:0000255" key="1">
    <source>
        <dbReference type="HAMAP-Rule" id="MF_01302"/>
    </source>
</evidence>
<evidence type="ECO:0000305" key="2"/>